<accession>O46502</accession>
<proteinExistence type="evidence at transcript level"/>
<organism>
    <name type="scientific">Oryctolagus cuniculus</name>
    <name type="common">Rabbit</name>
    <dbReference type="NCBI Taxonomy" id="9986"/>
    <lineage>
        <taxon>Eukaryota</taxon>
        <taxon>Metazoa</taxon>
        <taxon>Chordata</taxon>
        <taxon>Craniata</taxon>
        <taxon>Vertebrata</taxon>
        <taxon>Euteleostomi</taxon>
        <taxon>Mammalia</taxon>
        <taxon>Eutheria</taxon>
        <taxon>Euarchontoglires</taxon>
        <taxon>Glires</taxon>
        <taxon>Lagomorpha</taxon>
        <taxon>Leporidae</taxon>
        <taxon>Oryctolagus</taxon>
    </lineage>
</organism>
<keyword id="KW-1003">Cell membrane</keyword>
<keyword id="KW-1015">Disulfide bond</keyword>
<keyword id="KW-0297">G-protein coupled receptor</keyword>
<keyword id="KW-0325">Glycoprotein</keyword>
<keyword id="KW-0472">Membrane</keyword>
<keyword id="KW-0597">Phosphoprotein</keyword>
<keyword id="KW-0675">Receptor</keyword>
<keyword id="KW-1185">Reference proteome</keyword>
<keyword id="KW-0732">Signal</keyword>
<keyword id="KW-0807">Transducer</keyword>
<keyword id="KW-0812">Transmembrane</keyword>
<keyword id="KW-1133">Transmembrane helix</keyword>
<reference key="1">
    <citation type="journal article" date="1998" name="Peptides">
        <title>Molecular cloning and in vitro properties of the recombinant rabbit secretin receptor.</title>
        <authorList>
            <person name="Svoboda M."/>
            <person name="Tastenoy M."/>
            <person name="de Neef P."/>
            <person name="Delporte C."/>
            <person name="Waelbroeck M."/>
            <person name="Robberecht P."/>
        </authorList>
    </citation>
    <scope>NUCLEOTIDE SEQUENCE [MRNA]</scope>
</reference>
<dbReference type="EMBL" id="AF025411">
    <property type="protein sequence ID" value="AAC32767.1"/>
    <property type="molecule type" value="mRNA"/>
</dbReference>
<dbReference type="RefSeq" id="NP_001075497.1">
    <property type="nucleotide sequence ID" value="NM_001082028.1"/>
</dbReference>
<dbReference type="SMR" id="O46502"/>
<dbReference type="FunCoup" id="O46502">
    <property type="interactions" value="19"/>
</dbReference>
<dbReference type="STRING" id="9986.ENSOCUP00000006668"/>
<dbReference type="GlyCosmos" id="O46502">
    <property type="glycosylation" value="4 sites, No reported glycans"/>
</dbReference>
<dbReference type="PaxDb" id="9986-ENSOCUP00000006668"/>
<dbReference type="GeneID" id="100008671"/>
<dbReference type="KEGG" id="ocu:100008671"/>
<dbReference type="CTD" id="6344"/>
<dbReference type="eggNOG" id="KOG4564">
    <property type="taxonomic scope" value="Eukaryota"/>
</dbReference>
<dbReference type="InParanoid" id="O46502"/>
<dbReference type="OrthoDB" id="5967113at2759"/>
<dbReference type="Proteomes" id="UP000001811">
    <property type="component" value="Unplaced"/>
</dbReference>
<dbReference type="GO" id="GO:0016323">
    <property type="term" value="C:basolateral plasma membrane"/>
    <property type="evidence" value="ECO:0007669"/>
    <property type="project" value="UniProtKB-SubCell"/>
</dbReference>
<dbReference type="GO" id="GO:0005881">
    <property type="term" value="C:cytoplasmic microtubule"/>
    <property type="evidence" value="ECO:0000250"/>
    <property type="project" value="UniProtKB"/>
</dbReference>
<dbReference type="GO" id="GO:0008528">
    <property type="term" value="F:G protein-coupled peptide receptor activity"/>
    <property type="evidence" value="ECO:0007669"/>
    <property type="project" value="TreeGrafter"/>
</dbReference>
<dbReference type="GO" id="GO:0017046">
    <property type="term" value="F:peptide hormone binding"/>
    <property type="evidence" value="ECO:0007669"/>
    <property type="project" value="TreeGrafter"/>
</dbReference>
<dbReference type="GO" id="GO:0015055">
    <property type="term" value="F:secretin receptor activity"/>
    <property type="evidence" value="ECO:0000250"/>
    <property type="project" value="UniProtKB"/>
</dbReference>
<dbReference type="GO" id="GO:0007189">
    <property type="term" value="P:adenylate cyclase-activating G protein-coupled receptor signaling pathway"/>
    <property type="evidence" value="ECO:0000250"/>
    <property type="project" value="UniProtKB"/>
</dbReference>
<dbReference type="GO" id="GO:0007166">
    <property type="term" value="P:cell surface receptor signaling pathway"/>
    <property type="evidence" value="ECO:0007669"/>
    <property type="project" value="InterPro"/>
</dbReference>
<dbReference type="GO" id="GO:0002024">
    <property type="term" value="P:diet induced thermogenesis"/>
    <property type="evidence" value="ECO:0000250"/>
    <property type="project" value="UniProtKB"/>
</dbReference>
<dbReference type="GO" id="GO:0009992">
    <property type="term" value="P:intracellular water homeostasis"/>
    <property type="evidence" value="ECO:0000250"/>
    <property type="project" value="UniProtKB"/>
</dbReference>
<dbReference type="GO" id="GO:0032098">
    <property type="term" value="P:regulation of appetite"/>
    <property type="evidence" value="ECO:0000250"/>
    <property type="project" value="UniProtKB"/>
</dbReference>
<dbReference type="GO" id="GO:0048167">
    <property type="term" value="P:regulation of synaptic plasticity"/>
    <property type="evidence" value="ECO:0000250"/>
    <property type="project" value="UniProtKB"/>
</dbReference>
<dbReference type="GO" id="GO:0031667">
    <property type="term" value="P:response to nutrient levels"/>
    <property type="evidence" value="ECO:0000250"/>
    <property type="project" value="UniProtKB"/>
</dbReference>
<dbReference type="CDD" id="cd15275">
    <property type="entry name" value="7tmB1_secretin"/>
    <property type="match status" value="1"/>
</dbReference>
<dbReference type="FunFam" id="4.10.1240.10:FF:000018">
    <property type="entry name" value="Secretin receptor"/>
    <property type="match status" value="1"/>
</dbReference>
<dbReference type="FunFam" id="1.20.1070.10:FF:000032">
    <property type="entry name" value="Vasoactive intestinal polypeptide receptor 1"/>
    <property type="match status" value="1"/>
</dbReference>
<dbReference type="Gene3D" id="4.10.1240.10">
    <property type="entry name" value="GPCR, family 2, extracellular hormone receptor domain"/>
    <property type="match status" value="1"/>
</dbReference>
<dbReference type="Gene3D" id="1.20.1070.10">
    <property type="entry name" value="Rhodopsin 7-helix transmembrane proteins"/>
    <property type="match status" value="1"/>
</dbReference>
<dbReference type="InterPro" id="IPR050332">
    <property type="entry name" value="GPCR_2"/>
</dbReference>
<dbReference type="InterPro" id="IPR017981">
    <property type="entry name" value="GPCR_2-like_7TM"/>
</dbReference>
<dbReference type="InterPro" id="IPR036445">
    <property type="entry name" value="GPCR_2_extracell_dom_sf"/>
</dbReference>
<dbReference type="InterPro" id="IPR001879">
    <property type="entry name" value="GPCR_2_extracellular_dom"/>
</dbReference>
<dbReference type="InterPro" id="IPR000832">
    <property type="entry name" value="GPCR_2_secretin-like"/>
</dbReference>
<dbReference type="InterPro" id="IPR017983">
    <property type="entry name" value="GPCR_2_secretin-like_CS"/>
</dbReference>
<dbReference type="InterPro" id="IPR002144">
    <property type="entry name" value="GPCR_2_secretin_rcpt"/>
</dbReference>
<dbReference type="InterPro" id="IPR047037">
    <property type="entry name" value="Secretin_7TM"/>
</dbReference>
<dbReference type="PANTHER" id="PTHR45620">
    <property type="entry name" value="PDF RECEPTOR-LIKE PROTEIN-RELATED"/>
    <property type="match status" value="1"/>
</dbReference>
<dbReference type="PANTHER" id="PTHR45620:SF13">
    <property type="entry name" value="SECRETIN RECEPTOR"/>
    <property type="match status" value="1"/>
</dbReference>
<dbReference type="Pfam" id="PF00002">
    <property type="entry name" value="7tm_2"/>
    <property type="match status" value="1"/>
</dbReference>
<dbReference type="Pfam" id="PF02793">
    <property type="entry name" value="HRM"/>
    <property type="match status" value="1"/>
</dbReference>
<dbReference type="PRINTS" id="PR00249">
    <property type="entry name" value="GPCRSECRETIN"/>
</dbReference>
<dbReference type="PRINTS" id="PR00490">
    <property type="entry name" value="SECRETINR"/>
</dbReference>
<dbReference type="SMART" id="SM00008">
    <property type="entry name" value="HormR"/>
    <property type="match status" value="1"/>
</dbReference>
<dbReference type="SUPFAM" id="SSF81321">
    <property type="entry name" value="Family A G protein-coupled receptor-like"/>
    <property type="match status" value="1"/>
</dbReference>
<dbReference type="SUPFAM" id="SSF111418">
    <property type="entry name" value="Hormone receptor domain"/>
    <property type="match status" value="1"/>
</dbReference>
<dbReference type="PROSITE" id="PS00649">
    <property type="entry name" value="G_PROTEIN_RECEP_F2_1"/>
    <property type="match status" value="1"/>
</dbReference>
<dbReference type="PROSITE" id="PS00650">
    <property type="entry name" value="G_PROTEIN_RECEP_F2_2"/>
    <property type="match status" value="1"/>
</dbReference>
<dbReference type="PROSITE" id="PS50227">
    <property type="entry name" value="G_PROTEIN_RECEP_F2_3"/>
    <property type="match status" value="1"/>
</dbReference>
<dbReference type="PROSITE" id="PS50261">
    <property type="entry name" value="G_PROTEIN_RECEP_F2_4"/>
    <property type="match status" value="1"/>
</dbReference>
<protein>
    <recommendedName>
        <fullName>Secretin receptor</fullName>
        <shortName>SCT-R</shortName>
    </recommendedName>
</protein>
<gene>
    <name type="primary">SCTR</name>
</gene>
<feature type="signal peptide" evidence="5">
    <location>
        <begin position="1"/>
        <end position="21"/>
    </location>
</feature>
<feature type="chain" id="PRO_0000012853" description="Secretin receptor">
    <location>
        <begin position="22"/>
        <end position="445"/>
    </location>
</feature>
<feature type="topological domain" description="Extracellular" evidence="6">
    <location>
        <begin position="22"/>
        <end position="137"/>
    </location>
</feature>
<feature type="transmembrane region" description="Helical; Name=1" evidence="3">
    <location>
        <begin position="138"/>
        <end position="163"/>
    </location>
</feature>
<feature type="topological domain" description="Cytoplasmic" evidence="6">
    <location>
        <begin position="164"/>
        <end position="170"/>
    </location>
</feature>
<feature type="transmembrane region" description="Helical; Name=2" evidence="3">
    <location>
        <begin position="171"/>
        <end position="191"/>
    </location>
</feature>
<feature type="topological domain" description="Extracellular" evidence="6">
    <location>
        <begin position="192"/>
        <end position="212"/>
    </location>
</feature>
<feature type="transmembrane region" description="Helical; Name=3" evidence="3">
    <location>
        <begin position="213"/>
        <end position="235"/>
    </location>
</feature>
<feature type="topological domain" description="Cytoplasmic" evidence="6">
    <location>
        <begin position="236"/>
        <end position="250"/>
    </location>
</feature>
<feature type="transmembrane region" description="Helical; Name=4" evidence="3">
    <location>
        <begin position="251"/>
        <end position="272"/>
    </location>
</feature>
<feature type="topological domain" description="Extracellular" evidence="6">
    <location>
        <begin position="273"/>
        <end position="287"/>
    </location>
</feature>
<feature type="transmembrane region" description="Helical; Name=5" evidence="3">
    <location>
        <begin position="288"/>
        <end position="311"/>
    </location>
</feature>
<feature type="topological domain" description="Cytoplasmic" evidence="6">
    <location>
        <begin position="312"/>
        <end position="336"/>
    </location>
</feature>
<feature type="transmembrane region" description="Helical; Name=6" evidence="3">
    <location>
        <begin position="337"/>
        <end position="352"/>
    </location>
</feature>
<feature type="topological domain" description="Extracellular" evidence="6">
    <location>
        <begin position="353"/>
        <end position="363"/>
    </location>
</feature>
<feature type="transmembrane region" description="Helical; Name=7" evidence="3">
    <location>
        <begin position="364"/>
        <end position="387"/>
    </location>
</feature>
<feature type="topological domain" description="Cytoplasmic" evidence="6">
    <location>
        <begin position="388"/>
        <end position="445"/>
    </location>
</feature>
<feature type="glycosylation site" description="N-linked (GlcNAc...) asparagine" evidence="5">
    <location>
        <position position="68"/>
    </location>
</feature>
<feature type="glycosylation site" description="N-linked (GlcNAc...) asparagine" evidence="5">
    <location>
        <position position="96"/>
    </location>
</feature>
<feature type="glycosylation site" description="N-linked (GlcNAc...) asparagine" evidence="5">
    <location>
        <position position="102"/>
    </location>
</feature>
<feature type="glycosylation site" description="N-linked (GlcNAc...) asparagine" evidence="5">
    <location>
        <position position="124"/>
    </location>
</feature>
<feature type="disulfide bond" evidence="3">
    <location>
        <begin position="44"/>
        <end position="71"/>
    </location>
</feature>
<feature type="disulfide bond" evidence="3">
    <location>
        <begin position="62"/>
        <end position="103"/>
    </location>
</feature>
<feature type="disulfide bond" evidence="3">
    <location>
        <begin position="85"/>
        <end position="119"/>
    </location>
</feature>
<feature type="disulfide bond" evidence="3">
    <location>
        <begin position="211"/>
        <end position="281"/>
    </location>
</feature>
<name>SCTR_RABIT</name>
<comment type="function">
    <text evidence="1 4">G protein-coupled receptor activated by secretin (SCT), which is involved in different processes such as regulation of the pH of the duodenal content, food intake and water homeostasis. Ligand binding causes a conformation change that triggers signaling via guanine nucleotide-binding proteins (G proteins) and activates cAMP-dependent pathway (By similarity). Upon binding to secretin, regulates the pH of the duodenum by (1) inhibiting the secretion of gastric acid from the parietal cells of the stomach and (2) stimulating the production of bicarbonate (NaHCO(3)) from the ductal cells of the pancreas (By similarity). In addition to regulating the pH of the duodenal content, plays a central role in diet induced thermogenesis: acts as a non-sympathetic brown fat (BAT) activator mediating prandial thermogenesis, which consequentially induces satiation. Mechanistically, secretin released by the gut after a meal binds to secretin receptor (SCTR) in brown adipocytes, activating brown fat thermogenesis by stimulating lipolysis, which is sensed in the brain and promotes satiation. Also able to stimulate lipolysis in white adipocytes. Also plays an important role in cellular osmoregulation by regulating renal water reabsorption. Also plays a role in the central nervous system: required for synaptic plasticity (By similarity).</text>
</comment>
<comment type="subcellular location">
    <subcellularLocation>
        <location evidence="4">Cell membrane</location>
        <topology evidence="3">Multi-pass membrane protein</topology>
    </subcellularLocation>
    <subcellularLocation>
        <location evidence="4">Basolateral cell membrane</location>
        <topology evidence="3">Multi-pass membrane protein</topology>
    </subcellularLocation>
</comment>
<comment type="PTM">
    <text evidence="2">Phosphorylated on Ser and Thr residues at the cytoplasmic C-terminus by G protein-coupled receptor kinases (GRKs).</text>
</comment>
<comment type="similarity">
    <text evidence="6">Belongs to the G-protein coupled receptor 2 family.</text>
</comment>
<evidence type="ECO:0000250" key="1">
    <source>
        <dbReference type="UniProtKB" id="P11384"/>
    </source>
</evidence>
<evidence type="ECO:0000250" key="2">
    <source>
        <dbReference type="UniProtKB" id="P23811"/>
    </source>
</evidence>
<evidence type="ECO:0000250" key="3">
    <source>
        <dbReference type="UniProtKB" id="P47872"/>
    </source>
</evidence>
<evidence type="ECO:0000250" key="4">
    <source>
        <dbReference type="UniProtKB" id="Q5FWI2"/>
    </source>
</evidence>
<evidence type="ECO:0000255" key="5"/>
<evidence type="ECO:0000305" key="6"/>
<sequence>MCPRPGPPLGLWLLLGFACAAHLVGAPPRLCDVLWVLQEERDQCLQELERERLGEEQPVPGCQGLWDNVSCWPSSAPGRMVELECPRFLRMLTNSNGSLFRNCTQDGWTETFPRPDLACGVSMNDSSHERQHAYLLKLKVMYTVGYSSSLVMLLVALGILCAFRRLHCTRNYIHMHLFLSFILRALSNFIKDAVLFSSDDAIHCDAHRVGCKLVMVFFQYCIMANYAWLLVEGLYLHSLLVVSFFSERKCLQGFVVLGWGSPAMFVTSWAVTRHFLEDSGCWDINANAAIWWVIRGPVILSILINFILFINILRILTRKLRTQETRGQDMNHYKRLARSTLLLIPLFGVHYIVFVFSPEGAMEIQLFFELALGSFQGLVVAVLYCFLNGEVQLEVQKKWQQWHLWEPPLCPVALSSSFSNGTSSLNSTKACPSGRSRDTCKVSII</sequence>